<proteinExistence type="inferred from homology"/>
<accession>Q5KZT7</accession>
<gene>
    <name evidence="1" type="primary">sspH2</name>
    <name type="ordered locus">GK1514</name>
</gene>
<name>SSPH2_GEOKA</name>
<evidence type="ECO:0000255" key="1">
    <source>
        <dbReference type="HAMAP-Rule" id="MF_00667"/>
    </source>
</evidence>
<organism>
    <name type="scientific">Geobacillus kaustophilus (strain HTA426)</name>
    <dbReference type="NCBI Taxonomy" id="235909"/>
    <lineage>
        <taxon>Bacteria</taxon>
        <taxon>Bacillati</taxon>
        <taxon>Bacillota</taxon>
        <taxon>Bacilli</taxon>
        <taxon>Bacillales</taxon>
        <taxon>Anoxybacillaceae</taxon>
        <taxon>Geobacillus</taxon>
        <taxon>Geobacillus thermoleovorans group</taxon>
    </lineage>
</organism>
<comment type="subcellular location">
    <subcellularLocation>
        <location evidence="1">Spore core</location>
    </subcellularLocation>
</comment>
<comment type="induction">
    <text evidence="1">Expressed only in the forespore compartment of sporulating cells.</text>
</comment>
<comment type="similarity">
    <text evidence="1">Belongs to the SspH family.</text>
</comment>
<feature type="chain" id="PRO_0000162322" description="Small, acid-soluble spore protein H 2">
    <location>
        <begin position="1"/>
        <end position="59"/>
    </location>
</feature>
<sequence>MELLRAKRMAEAGEIVPVMYKGKQVVIQHVDDEREMARVYFTDEPEHEQDVPVRLLEEQ</sequence>
<dbReference type="EMBL" id="BA000043">
    <property type="protein sequence ID" value="BAD75799.1"/>
    <property type="molecule type" value="Genomic_DNA"/>
</dbReference>
<dbReference type="RefSeq" id="WP_011231010.1">
    <property type="nucleotide sequence ID" value="NC_006510.1"/>
</dbReference>
<dbReference type="STRING" id="235909.GK1514"/>
<dbReference type="KEGG" id="gka:GK1514"/>
<dbReference type="eggNOG" id="ENOG50304MV">
    <property type="taxonomic scope" value="Bacteria"/>
</dbReference>
<dbReference type="HOGENOM" id="CLU_191960_2_1_9"/>
<dbReference type="Proteomes" id="UP000001172">
    <property type="component" value="Chromosome"/>
</dbReference>
<dbReference type="GO" id="GO:0042601">
    <property type="term" value="C:endospore-forming forespore"/>
    <property type="evidence" value="ECO:0007669"/>
    <property type="project" value="InterPro"/>
</dbReference>
<dbReference type="GO" id="GO:0030436">
    <property type="term" value="P:asexual sporulation"/>
    <property type="evidence" value="ECO:0007669"/>
    <property type="project" value="UniProtKB-UniRule"/>
</dbReference>
<dbReference type="GO" id="GO:0030435">
    <property type="term" value="P:sporulation resulting in formation of a cellular spore"/>
    <property type="evidence" value="ECO:0007669"/>
    <property type="project" value="UniProtKB-KW"/>
</dbReference>
<dbReference type="HAMAP" id="MF_00667">
    <property type="entry name" value="SspH"/>
    <property type="match status" value="1"/>
</dbReference>
<dbReference type="InterPro" id="IPR012610">
    <property type="entry name" value="SASP_SspH"/>
</dbReference>
<dbReference type="NCBIfam" id="TIGR02861">
    <property type="entry name" value="SASP_H"/>
    <property type="match status" value="1"/>
</dbReference>
<dbReference type="Pfam" id="PF08141">
    <property type="entry name" value="SspH"/>
    <property type="match status" value="1"/>
</dbReference>
<keyword id="KW-1185">Reference proteome</keyword>
<keyword id="KW-0749">Sporulation</keyword>
<reference key="1">
    <citation type="journal article" date="2004" name="Nucleic Acids Res.">
        <title>Thermoadaptation trait revealed by the genome sequence of thermophilic Geobacillus kaustophilus.</title>
        <authorList>
            <person name="Takami H."/>
            <person name="Takaki Y."/>
            <person name="Chee G.-J."/>
            <person name="Nishi S."/>
            <person name="Shimamura S."/>
            <person name="Suzuki H."/>
            <person name="Matsui S."/>
            <person name="Uchiyama I."/>
        </authorList>
    </citation>
    <scope>NUCLEOTIDE SEQUENCE [LARGE SCALE GENOMIC DNA]</scope>
    <source>
        <strain>HTA426</strain>
    </source>
</reference>
<protein>
    <recommendedName>
        <fullName evidence="1">Small, acid-soluble spore protein H 2</fullName>
        <shortName evidence="1">SASP H 2</shortName>
    </recommendedName>
</protein>